<dbReference type="EMBL" id="AE017198">
    <property type="protein sequence ID" value="AAS09476.1"/>
    <property type="molecule type" value="Genomic_DNA"/>
</dbReference>
<dbReference type="RefSeq" id="WP_004893510.1">
    <property type="nucleotide sequence ID" value="NC_005362.1"/>
</dbReference>
<dbReference type="TCDB" id="3.A.1.29.1">
    <property type="family name" value="the atp-binding cassette (abc) superfamily"/>
</dbReference>
<dbReference type="KEGG" id="ljo:LJ_1703"/>
<dbReference type="eggNOG" id="COG4720">
    <property type="taxonomic scope" value="Bacteria"/>
</dbReference>
<dbReference type="HOGENOM" id="CLU_120023_0_0_9"/>
<dbReference type="Proteomes" id="UP000000581">
    <property type="component" value="Chromosome"/>
</dbReference>
<dbReference type="GO" id="GO:0005886">
    <property type="term" value="C:plasma membrane"/>
    <property type="evidence" value="ECO:0007669"/>
    <property type="project" value="UniProtKB-SubCell"/>
</dbReference>
<dbReference type="Gene3D" id="1.10.1760.20">
    <property type="match status" value="1"/>
</dbReference>
<dbReference type="HAMAP" id="MF_01572">
    <property type="entry name" value="UPF0397"/>
    <property type="match status" value="1"/>
</dbReference>
<dbReference type="InterPro" id="IPR009825">
    <property type="entry name" value="ECF_substrate-spec-like"/>
</dbReference>
<dbReference type="InterPro" id="IPR022914">
    <property type="entry name" value="UPF0397"/>
</dbReference>
<dbReference type="NCBIfam" id="NF010182">
    <property type="entry name" value="PRK13661.1"/>
    <property type="match status" value="1"/>
</dbReference>
<dbReference type="PANTHER" id="PTHR37815">
    <property type="entry name" value="UPF0397 PROTEIN BC_2624-RELATED"/>
    <property type="match status" value="1"/>
</dbReference>
<dbReference type="PANTHER" id="PTHR37815:SF3">
    <property type="entry name" value="UPF0397 PROTEIN SPR0429"/>
    <property type="match status" value="1"/>
</dbReference>
<dbReference type="Pfam" id="PF07155">
    <property type="entry name" value="ECF-ribofla_trS"/>
    <property type="match status" value="1"/>
</dbReference>
<keyword id="KW-1003">Cell membrane</keyword>
<keyword id="KW-0472">Membrane</keyword>
<keyword id="KW-0812">Transmembrane</keyword>
<keyword id="KW-1133">Transmembrane helix</keyword>
<organism>
    <name type="scientific">Lactobacillus johnsonii (strain CNCM I-12250 / La1 / NCC 533)</name>
    <dbReference type="NCBI Taxonomy" id="257314"/>
    <lineage>
        <taxon>Bacteria</taxon>
        <taxon>Bacillati</taxon>
        <taxon>Bacillota</taxon>
        <taxon>Bacilli</taxon>
        <taxon>Lactobacillales</taxon>
        <taxon>Lactobacillaceae</taxon>
        <taxon>Lactobacillus</taxon>
    </lineage>
</organism>
<gene>
    <name type="ordered locus">LJ_1703</name>
</gene>
<accession>Q74I63</accession>
<proteinExistence type="inferred from homology"/>
<name>Y1703_LACJO</name>
<sequence length="185" mass="19948">MNNQKGLSVKSVVAIGIGAAIYVILARFTSIPTGIPNTNIEIVYPFLALLATIYGPVVGFSVGFIGHALSDFLMYGQTWWSWVLATAVLGLIIGLYGMRLDLENGVFTTKQMIGFNIVQIIANVVSWLIIAPVGDILIYSEPQNKVFLQGATATITNSISILILGTILLKAYAATKVKKGSLRRD</sequence>
<protein>
    <recommendedName>
        <fullName evidence="1">UPF0397 protein LJ_1703</fullName>
    </recommendedName>
</protein>
<reference key="1">
    <citation type="journal article" date="2004" name="Proc. Natl. Acad. Sci. U.S.A.">
        <title>The genome sequence of the probiotic intestinal bacterium Lactobacillus johnsonii NCC 533.</title>
        <authorList>
            <person name="Pridmore R.D."/>
            <person name="Berger B."/>
            <person name="Desiere F."/>
            <person name="Vilanova D."/>
            <person name="Barretto C."/>
            <person name="Pittet A.-C."/>
            <person name="Zwahlen M.-C."/>
            <person name="Rouvet M."/>
            <person name="Altermann E."/>
            <person name="Barrangou R."/>
            <person name="Mollet B."/>
            <person name="Mercenier A."/>
            <person name="Klaenhammer T."/>
            <person name="Arigoni F."/>
            <person name="Schell M.A."/>
        </authorList>
    </citation>
    <scope>NUCLEOTIDE SEQUENCE [LARGE SCALE GENOMIC DNA]</scope>
    <source>
        <strain>CNCM I-1225 / La1 / NCC 533</strain>
    </source>
</reference>
<evidence type="ECO:0000255" key="1">
    <source>
        <dbReference type="HAMAP-Rule" id="MF_01572"/>
    </source>
</evidence>
<comment type="subcellular location">
    <subcellularLocation>
        <location evidence="1">Cell membrane</location>
        <topology evidence="1">Multi-pass membrane protein</topology>
    </subcellularLocation>
</comment>
<comment type="similarity">
    <text evidence="1">Belongs to the UPF0397 family.</text>
</comment>
<feature type="chain" id="PRO_0000260795" description="UPF0397 protein LJ_1703">
    <location>
        <begin position="1"/>
        <end position="185"/>
    </location>
</feature>
<feature type="transmembrane region" description="Helical" evidence="1">
    <location>
        <begin position="6"/>
        <end position="26"/>
    </location>
</feature>
<feature type="transmembrane region" description="Helical" evidence="1">
    <location>
        <begin position="46"/>
        <end position="66"/>
    </location>
</feature>
<feature type="transmembrane region" description="Helical" evidence="1">
    <location>
        <begin position="78"/>
        <end position="98"/>
    </location>
</feature>
<feature type="transmembrane region" description="Helical" evidence="1">
    <location>
        <begin position="113"/>
        <end position="133"/>
    </location>
</feature>
<feature type="transmembrane region" description="Helical" evidence="1">
    <location>
        <begin position="147"/>
        <end position="167"/>
    </location>
</feature>